<evidence type="ECO:0000255" key="1">
    <source>
        <dbReference type="HAMAP-Rule" id="MF_00607"/>
    </source>
</evidence>
<name>RSMA_SYNS3</name>
<keyword id="KW-0963">Cytoplasm</keyword>
<keyword id="KW-0489">Methyltransferase</keyword>
<keyword id="KW-1185">Reference proteome</keyword>
<keyword id="KW-0694">RNA-binding</keyword>
<keyword id="KW-0698">rRNA processing</keyword>
<keyword id="KW-0949">S-adenosyl-L-methionine</keyword>
<keyword id="KW-0808">Transferase</keyword>
<sequence length="277" mass="30394">MTFSGHTARKRFGQHWLINERVLDRIVEAAELQDGDRVLEVGPGRGALTERLLASAAAAIHAVELDRDLVAGLQQTFASHPKFSLQEGDVLSVPLELSGGVPANKVVANIPYNITGPLLDRLIGRLDRPVDFSYQRLVLLVQHEVAQRIRARPGHSNFSALSVRMQLLGRCSHVCPVPPRCFQPPPKVQSEVICIDPFPPERRPTAALSRGVERLLKMAFLSRRKMLRNTLAPVGSTDLLQSLAEEAGISLQQRPQDVAPEAWVALAKGLNQVDSVA</sequence>
<accession>Q0I9S3</accession>
<proteinExistence type="inferred from homology"/>
<protein>
    <recommendedName>
        <fullName evidence="1">Ribosomal RNA small subunit methyltransferase A</fullName>
        <ecNumber evidence="1">2.1.1.182</ecNumber>
    </recommendedName>
    <alternativeName>
        <fullName evidence="1">16S rRNA (adenine(1518)-N(6)/adenine(1519)-N(6))-dimethyltransferase</fullName>
    </alternativeName>
    <alternativeName>
        <fullName evidence="1">16S rRNA dimethyladenosine transferase</fullName>
    </alternativeName>
    <alternativeName>
        <fullName evidence="1">16S rRNA dimethylase</fullName>
    </alternativeName>
    <alternativeName>
        <fullName evidence="1">S-adenosylmethionine-6-N', N'-adenosyl(rRNA) dimethyltransferase</fullName>
    </alternativeName>
</protein>
<dbReference type="EC" id="2.1.1.182" evidence="1"/>
<dbReference type="EMBL" id="CP000435">
    <property type="protein sequence ID" value="ABI45484.1"/>
    <property type="molecule type" value="Genomic_DNA"/>
</dbReference>
<dbReference type="RefSeq" id="WP_011619516.1">
    <property type="nucleotide sequence ID" value="NC_008319.1"/>
</dbReference>
<dbReference type="SMR" id="Q0I9S3"/>
<dbReference type="STRING" id="64471.sync_1594"/>
<dbReference type="KEGG" id="syg:sync_1594"/>
<dbReference type="eggNOG" id="COG0030">
    <property type="taxonomic scope" value="Bacteria"/>
</dbReference>
<dbReference type="HOGENOM" id="CLU_041220_0_1_3"/>
<dbReference type="OrthoDB" id="9814755at2"/>
<dbReference type="Proteomes" id="UP000001961">
    <property type="component" value="Chromosome"/>
</dbReference>
<dbReference type="GO" id="GO:0005829">
    <property type="term" value="C:cytosol"/>
    <property type="evidence" value="ECO:0007669"/>
    <property type="project" value="TreeGrafter"/>
</dbReference>
<dbReference type="GO" id="GO:0052908">
    <property type="term" value="F:16S rRNA (adenine(1518)-N(6)/adenine(1519)-N(6))-dimethyltransferase activity"/>
    <property type="evidence" value="ECO:0007669"/>
    <property type="project" value="UniProtKB-EC"/>
</dbReference>
<dbReference type="GO" id="GO:0003723">
    <property type="term" value="F:RNA binding"/>
    <property type="evidence" value="ECO:0007669"/>
    <property type="project" value="UniProtKB-KW"/>
</dbReference>
<dbReference type="Gene3D" id="1.10.8.100">
    <property type="entry name" value="Ribosomal RNA adenine dimethylase-like, domain 2"/>
    <property type="match status" value="1"/>
</dbReference>
<dbReference type="Gene3D" id="3.40.50.150">
    <property type="entry name" value="Vaccinia Virus protein VP39"/>
    <property type="match status" value="1"/>
</dbReference>
<dbReference type="HAMAP" id="MF_00607">
    <property type="entry name" value="16SrRNA_methyltr_A"/>
    <property type="match status" value="1"/>
</dbReference>
<dbReference type="InterPro" id="IPR001737">
    <property type="entry name" value="KsgA/Erm"/>
</dbReference>
<dbReference type="InterPro" id="IPR023165">
    <property type="entry name" value="rRNA_Ade_diMease-like_C"/>
</dbReference>
<dbReference type="InterPro" id="IPR020596">
    <property type="entry name" value="rRNA_Ade_Mease_Trfase_CS"/>
</dbReference>
<dbReference type="InterPro" id="IPR020598">
    <property type="entry name" value="rRNA_Ade_methylase_Trfase_N"/>
</dbReference>
<dbReference type="InterPro" id="IPR011530">
    <property type="entry name" value="rRNA_adenine_dimethylase"/>
</dbReference>
<dbReference type="InterPro" id="IPR029063">
    <property type="entry name" value="SAM-dependent_MTases_sf"/>
</dbReference>
<dbReference type="NCBIfam" id="TIGR00755">
    <property type="entry name" value="ksgA"/>
    <property type="match status" value="1"/>
</dbReference>
<dbReference type="PANTHER" id="PTHR11727">
    <property type="entry name" value="DIMETHYLADENOSINE TRANSFERASE"/>
    <property type="match status" value="1"/>
</dbReference>
<dbReference type="PANTHER" id="PTHR11727:SF7">
    <property type="entry name" value="DIMETHYLADENOSINE TRANSFERASE-RELATED"/>
    <property type="match status" value="1"/>
</dbReference>
<dbReference type="Pfam" id="PF00398">
    <property type="entry name" value="RrnaAD"/>
    <property type="match status" value="1"/>
</dbReference>
<dbReference type="SMART" id="SM00650">
    <property type="entry name" value="rADc"/>
    <property type="match status" value="1"/>
</dbReference>
<dbReference type="SUPFAM" id="SSF53335">
    <property type="entry name" value="S-adenosyl-L-methionine-dependent methyltransferases"/>
    <property type="match status" value="1"/>
</dbReference>
<dbReference type="PROSITE" id="PS01131">
    <property type="entry name" value="RRNA_A_DIMETH"/>
    <property type="match status" value="1"/>
</dbReference>
<dbReference type="PROSITE" id="PS51689">
    <property type="entry name" value="SAM_RNA_A_N6_MT"/>
    <property type="match status" value="1"/>
</dbReference>
<feature type="chain" id="PRO_1000056685" description="Ribosomal RNA small subunit methyltransferase A">
    <location>
        <begin position="1"/>
        <end position="277"/>
    </location>
</feature>
<feature type="binding site" evidence="1">
    <location>
        <position position="15"/>
    </location>
    <ligand>
        <name>S-adenosyl-L-methionine</name>
        <dbReference type="ChEBI" id="CHEBI:59789"/>
    </ligand>
</feature>
<feature type="binding site" evidence="1">
    <location>
        <position position="17"/>
    </location>
    <ligand>
        <name>S-adenosyl-L-methionine</name>
        <dbReference type="ChEBI" id="CHEBI:59789"/>
    </ligand>
</feature>
<feature type="binding site" evidence="1">
    <location>
        <position position="42"/>
    </location>
    <ligand>
        <name>S-adenosyl-L-methionine</name>
        <dbReference type="ChEBI" id="CHEBI:59789"/>
    </ligand>
</feature>
<feature type="binding site" evidence="1">
    <location>
        <position position="64"/>
    </location>
    <ligand>
        <name>S-adenosyl-L-methionine</name>
        <dbReference type="ChEBI" id="CHEBI:59789"/>
    </ligand>
</feature>
<feature type="binding site" evidence="1">
    <location>
        <position position="89"/>
    </location>
    <ligand>
        <name>S-adenosyl-L-methionine</name>
        <dbReference type="ChEBI" id="CHEBI:59789"/>
    </ligand>
</feature>
<feature type="binding site" evidence="1">
    <location>
        <position position="109"/>
    </location>
    <ligand>
        <name>S-adenosyl-L-methionine</name>
        <dbReference type="ChEBI" id="CHEBI:59789"/>
    </ligand>
</feature>
<reference key="1">
    <citation type="journal article" date="2006" name="Proc. Natl. Acad. Sci. U.S.A.">
        <title>Genome sequence of Synechococcus CC9311: insights into adaptation to a coastal environment.</title>
        <authorList>
            <person name="Palenik B."/>
            <person name="Ren Q."/>
            <person name="Dupont C.L."/>
            <person name="Myers G.S."/>
            <person name="Heidelberg J.F."/>
            <person name="Badger J.H."/>
            <person name="Madupu R."/>
            <person name="Nelson W.C."/>
            <person name="Brinkac L.M."/>
            <person name="Dodson R.J."/>
            <person name="Durkin A.S."/>
            <person name="Daugherty S.C."/>
            <person name="Sullivan S.A."/>
            <person name="Khouri H."/>
            <person name="Mohamoud Y."/>
            <person name="Halpin R."/>
            <person name="Paulsen I.T."/>
        </authorList>
    </citation>
    <scope>NUCLEOTIDE SEQUENCE [LARGE SCALE GENOMIC DNA]</scope>
    <source>
        <strain>CC9311</strain>
    </source>
</reference>
<organism>
    <name type="scientific">Synechococcus sp. (strain CC9311)</name>
    <dbReference type="NCBI Taxonomy" id="64471"/>
    <lineage>
        <taxon>Bacteria</taxon>
        <taxon>Bacillati</taxon>
        <taxon>Cyanobacteriota</taxon>
        <taxon>Cyanophyceae</taxon>
        <taxon>Synechococcales</taxon>
        <taxon>Synechococcaceae</taxon>
        <taxon>Synechococcus</taxon>
    </lineage>
</organism>
<comment type="function">
    <text evidence="1">Specifically dimethylates two adjacent adenosines (A1518 and A1519) in the loop of a conserved hairpin near the 3'-end of 16S rRNA in the 30S particle. May play a critical role in biogenesis of 30S subunits.</text>
</comment>
<comment type="catalytic activity">
    <reaction evidence="1">
        <text>adenosine(1518)/adenosine(1519) in 16S rRNA + 4 S-adenosyl-L-methionine = N(6)-dimethyladenosine(1518)/N(6)-dimethyladenosine(1519) in 16S rRNA + 4 S-adenosyl-L-homocysteine + 4 H(+)</text>
        <dbReference type="Rhea" id="RHEA:19609"/>
        <dbReference type="Rhea" id="RHEA-COMP:10232"/>
        <dbReference type="Rhea" id="RHEA-COMP:10233"/>
        <dbReference type="ChEBI" id="CHEBI:15378"/>
        <dbReference type="ChEBI" id="CHEBI:57856"/>
        <dbReference type="ChEBI" id="CHEBI:59789"/>
        <dbReference type="ChEBI" id="CHEBI:74411"/>
        <dbReference type="ChEBI" id="CHEBI:74493"/>
        <dbReference type="EC" id="2.1.1.182"/>
    </reaction>
</comment>
<comment type="subcellular location">
    <subcellularLocation>
        <location evidence="1">Cytoplasm</location>
    </subcellularLocation>
</comment>
<comment type="similarity">
    <text evidence="1">Belongs to the class I-like SAM-binding methyltransferase superfamily. rRNA adenine N(6)-methyltransferase family. RsmA subfamily.</text>
</comment>
<gene>
    <name evidence="1" type="primary">rsmA</name>
    <name evidence="1" type="synonym">ksgA</name>
    <name type="ordered locus">sync_1594</name>
</gene>